<dbReference type="EC" id="4.3.2.10"/>
<dbReference type="EC" id="3.5.1.2"/>
<dbReference type="EMBL" id="AE000666">
    <property type="protein sequence ID" value="AAB85999.1"/>
    <property type="molecule type" value="Genomic_DNA"/>
</dbReference>
<dbReference type="PIR" id="D69070">
    <property type="entry name" value="D69070"/>
</dbReference>
<dbReference type="RefSeq" id="WP_010877134.1">
    <property type="nucleotide sequence ID" value="NC_000916.1"/>
</dbReference>
<dbReference type="SMR" id="O27568"/>
<dbReference type="FunCoup" id="O27568">
    <property type="interactions" value="76"/>
</dbReference>
<dbReference type="STRING" id="187420.MTH_1524"/>
<dbReference type="MEROPS" id="C26.965"/>
<dbReference type="PaxDb" id="187420-MTH_1524"/>
<dbReference type="EnsemblBacteria" id="AAB85999">
    <property type="protein sequence ID" value="AAB85999"/>
    <property type="gene ID" value="MTH_1524"/>
</dbReference>
<dbReference type="GeneID" id="1471793"/>
<dbReference type="GeneID" id="77402043"/>
<dbReference type="KEGG" id="mth:MTH_1524"/>
<dbReference type="PATRIC" id="fig|187420.15.peg.1487"/>
<dbReference type="HOGENOM" id="CLU_071837_2_2_2"/>
<dbReference type="InParanoid" id="O27568"/>
<dbReference type="UniPathway" id="UPA00031">
    <property type="reaction ID" value="UER00010"/>
</dbReference>
<dbReference type="Proteomes" id="UP000005223">
    <property type="component" value="Chromosome"/>
</dbReference>
<dbReference type="GO" id="GO:0005737">
    <property type="term" value="C:cytoplasm"/>
    <property type="evidence" value="ECO:0007669"/>
    <property type="project" value="UniProtKB-SubCell"/>
</dbReference>
<dbReference type="GO" id="GO:0004359">
    <property type="term" value="F:glutaminase activity"/>
    <property type="evidence" value="ECO:0007669"/>
    <property type="project" value="UniProtKB-EC"/>
</dbReference>
<dbReference type="GO" id="GO:0000107">
    <property type="term" value="F:imidazoleglycerol-phosphate synthase activity"/>
    <property type="evidence" value="ECO:0007669"/>
    <property type="project" value="UniProtKB-UniRule"/>
</dbReference>
<dbReference type="GO" id="GO:0016829">
    <property type="term" value="F:lyase activity"/>
    <property type="evidence" value="ECO:0007669"/>
    <property type="project" value="UniProtKB-KW"/>
</dbReference>
<dbReference type="GO" id="GO:0000105">
    <property type="term" value="P:L-histidine biosynthetic process"/>
    <property type="evidence" value="ECO:0007669"/>
    <property type="project" value="UniProtKB-UniRule"/>
</dbReference>
<dbReference type="CDD" id="cd01748">
    <property type="entry name" value="GATase1_IGP_Synthase"/>
    <property type="match status" value="1"/>
</dbReference>
<dbReference type="Gene3D" id="3.40.50.880">
    <property type="match status" value="1"/>
</dbReference>
<dbReference type="HAMAP" id="MF_00278">
    <property type="entry name" value="HisH"/>
    <property type="match status" value="1"/>
</dbReference>
<dbReference type="InterPro" id="IPR029062">
    <property type="entry name" value="Class_I_gatase-like"/>
</dbReference>
<dbReference type="InterPro" id="IPR017926">
    <property type="entry name" value="GATASE"/>
</dbReference>
<dbReference type="InterPro" id="IPR010139">
    <property type="entry name" value="Imidazole-glycPsynth_HisH"/>
</dbReference>
<dbReference type="NCBIfam" id="TIGR01855">
    <property type="entry name" value="IMP_synth_hisH"/>
    <property type="match status" value="1"/>
</dbReference>
<dbReference type="PANTHER" id="PTHR42701">
    <property type="entry name" value="IMIDAZOLE GLYCEROL PHOSPHATE SYNTHASE SUBUNIT HISH"/>
    <property type="match status" value="1"/>
</dbReference>
<dbReference type="PANTHER" id="PTHR42701:SF1">
    <property type="entry name" value="IMIDAZOLE GLYCEROL PHOSPHATE SYNTHASE SUBUNIT HISH"/>
    <property type="match status" value="1"/>
</dbReference>
<dbReference type="Pfam" id="PF00117">
    <property type="entry name" value="GATase"/>
    <property type="match status" value="1"/>
</dbReference>
<dbReference type="PIRSF" id="PIRSF000495">
    <property type="entry name" value="Amidotransf_hisH"/>
    <property type="match status" value="1"/>
</dbReference>
<dbReference type="SUPFAM" id="SSF52317">
    <property type="entry name" value="Class I glutamine amidotransferase-like"/>
    <property type="match status" value="1"/>
</dbReference>
<dbReference type="PROSITE" id="PS51273">
    <property type="entry name" value="GATASE_TYPE_1"/>
    <property type="match status" value="1"/>
</dbReference>
<evidence type="ECO:0000250" key="1"/>
<accession>O27568</accession>
<name>HIS5_METTH</name>
<organism>
    <name type="scientific">Methanothermobacter thermautotrophicus (strain ATCC 29096 / DSM 1053 / JCM 10044 / NBRC 100330 / Delta H)</name>
    <name type="common">Methanobacterium thermoautotrophicum</name>
    <dbReference type="NCBI Taxonomy" id="187420"/>
    <lineage>
        <taxon>Archaea</taxon>
        <taxon>Methanobacteriati</taxon>
        <taxon>Methanobacteriota</taxon>
        <taxon>Methanomada group</taxon>
        <taxon>Methanobacteria</taxon>
        <taxon>Methanobacteriales</taxon>
        <taxon>Methanobacteriaceae</taxon>
        <taxon>Methanothermobacter</taxon>
    </lineage>
</organism>
<protein>
    <recommendedName>
        <fullName>Imidazole glycerol phosphate synthase subunit HisH</fullName>
        <ecNumber>4.3.2.10</ecNumber>
    </recommendedName>
    <alternativeName>
        <fullName>IGP synthase glutaminase subunit</fullName>
        <ecNumber>3.5.1.2</ecNumber>
    </alternativeName>
    <alternativeName>
        <fullName>IGP synthase subunit HisH</fullName>
    </alternativeName>
    <alternativeName>
        <fullName>ImGP synthase subunit HisH</fullName>
        <shortName>IGPS subunit HisH</shortName>
    </alternativeName>
</protein>
<keyword id="KW-0028">Amino-acid biosynthesis</keyword>
<keyword id="KW-0963">Cytoplasm</keyword>
<keyword id="KW-0315">Glutamine amidotransferase</keyword>
<keyword id="KW-0368">Histidine biosynthesis</keyword>
<keyword id="KW-0378">Hydrolase</keyword>
<keyword id="KW-0456">Lyase</keyword>
<keyword id="KW-1185">Reference proteome</keyword>
<sequence>MIAIIDYGSGNLRSIANAFRKIGADALVTSDPQILEAADALVLPGVGAFGSAMAKLEGLRETLLGNIMDGKPFLGICLGLQVLLSESQESPGVHGLDLIPGRVIRIPPGNKVPHMGWNQLIIVEDSQLLEGAEDEYFYFVHSYYAEPSNDVVVARTDYGVEMTAAIESDNIHATQFHPEKSGEAGLDVLRNFVEIIRA</sequence>
<proteinExistence type="inferred from homology"/>
<gene>
    <name type="primary">hisH</name>
    <name type="ordered locus">MTH_1524</name>
</gene>
<comment type="function">
    <text evidence="1">IGPS catalyzes the conversion of PRFAR and glutamine to IGP, AICAR and glutamate. The HisH subunit catalyzes the hydrolysis of glutamine to glutamate and ammonia as part of the synthesis of IGP and AICAR. The resulting ammonia molecule is channeled to the active site of HisF (By similarity).</text>
</comment>
<comment type="catalytic activity">
    <reaction>
        <text>5-[(5-phospho-1-deoxy-D-ribulos-1-ylimino)methylamino]-1-(5-phospho-beta-D-ribosyl)imidazole-4-carboxamide + L-glutamine = D-erythro-1-(imidazol-4-yl)glycerol 3-phosphate + 5-amino-1-(5-phospho-beta-D-ribosyl)imidazole-4-carboxamide + L-glutamate + H(+)</text>
        <dbReference type="Rhea" id="RHEA:24793"/>
        <dbReference type="ChEBI" id="CHEBI:15378"/>
        <dbReference type="ChEBI" id="CHEBI:29985"/>
        <dbReference type="ChEBI" id="CHEBI:58278"/>
        <dbReference type="ChEBI" id="CHEBI:58359"/>
        <dbReference type="ChEBI" id="CHEBI:58475"/>
        <dbReference type="ChEBI" id="CHEBI:58525"/>
        <dbReference type="EC" id="4.3.2.10"/>
    </reaction>
</comment>
<comment type="catalytic activity">
    <reaction>
        <text>L-glutamine + H2O = L-glutamate + NH4(+)</text>
        <dbReference type="Rhea" id="RHEA:15889"/>
        <dbReference type="ChEBI" id="CHEBI:15377"/>
        <dbReference type="ChEBI" id="CHEBI:28938"/>
        <dbReference type="ChEBI" id="CHEBI:29985"/>
        <dbReference type="ChEBI" id="CHEBI:58359"/>
        <dbReference type="EC" id="3.5.1.2"/>
    </reaction>
</comment>
<comment type="pathway">
    <text>Amino-acid biosynthesis; L-histidine biosynthesis; L-histidine from 5-phospho-alpha-D-ribose 1-diphosphate: step 5/9.</text>
</comment>
<comment type="subunit">
    <text evidence="1">Heterodimer of HisH and HisF.</text>
</comment>
<comment type="subcellular location">
    <subcellularLocation>
        <location evidence="1">Cytoplasm</location>
    </subcellularLocation>
</comment>
<feature type="chain" id="PRO_0000152463" description="Imidazole glycerol phosphate synthase subunit HisH">
    <location>
        <begin position="1"/>
        <end position="198"/>
    </location>
</feature>
<feature type="domain" description="Glutamine amidotransferase type-1">
    <location>
        <begin position="1"/>
        <end position="198"/>
    </location>
</feature>
<feature type="active site" description="Nucleophile" evidence="1">
    <location>
        <position position="77"/>
    </location>
</feature>
<feature type="active site" evidence="1">
    <location>
        <position position="177"/>
    </location>
</feature>
<feature type="active site" evidence="1">
    <location>
        <position position="179"/>
    </location>
</feature>
<reference key="1">
    <citation type="journal article" date="1997" name="J. Bacteriol.">
        <title>Complete genome sequence of Methanobacterium thermoautotrophicum deltaH: functional analysis and comparative genomics.</title>
        <authorList>
            <person name="Smith D.R."/>
            <person name="Doucette-Stamm L.A."/>
            <person name="Deloughery C."/>
            <person name="Lee H.-M."/>
            <person name="Dubois J."/>
            <person name="Aldredge T."/>
            <person name="Bashirzadeh R."/>
            <person name="Blakely D."/>
            <person name="Cook R."/>
            <person name="Gilbert K."/>
            <person name="Harrison D."/>
            <person name="Hoang L."/>
            <person name="Keagle P."/>
            <person name="Lumm W."/>
            <person name="Pothier B."/>
            <person name="Qiu D."/>
            <person name="Spadafora R."/>
            <person name="Vicare R."/>
            <person name="Wang Y."/>
            <person name="Wierzbowski J."/>
            <person name="Gibson R."/>
            <person name="Jiwani N."/>
            <person name="Caruso A."/>
            <person name="Bush D."/>
            <person name="Safer H."/>
            <person name="Patwell D."/>
            <person name="Prabhakar S."/>
            <person name="McDougall S."/>
            <person name="Shimer G."/>
            <person name="Goyal A."/>
            <person name="Pietrovski S."/>
            <person name="Church G.M."/>
            <person name="Daniels C.J."/>
            <person name="Mao J.-I."/>
            <person name="Rice P."/>
            <person name="Noelling J."/>
            <person name="Reeve J.N."/>
        </authorList>
    </citation>
    <scope>NUCLEOTIDE SEQUENCE [LARGE SCALE GENOMIC DNA]</scope>
    <source>
        <strain>ATCC 29096 / DSM 1053 / JCM 10044 / NBRC 100330 / Delta H</strain>
    </source>
</reference>